<evidence type="ECO:0000255" key="1">
    <source>
        <dbReference type="HAMAP-Rule" id="MF_00302"/>
    </source>
</evidence>
<dbReference type="EMBL" id="BA000040">
    <property type="protein sequence ID" value="BAC47901.1"/>
    <property type="molecule type" value="Genomic_DNA"/>
</dbReference>
<dbReference type="RefSeq" id="NP_769276.1">
    <property type="nucleotide sequence ID" value="NC_004463.1"/>
</dbReference>
<dbReference type="RefSeq" id="WP_011085422.1">
    <property type="nucleotide sequence ID" value="NC_004463.1"/>
</dbReference>
<dbReference type="SMR" id="Q89RX6"/>
<dbReference type="STRING" id="224911.AAV28_10175"/>
<dbReference type="EnsemblBacteria" id="BAC47901">
    <property type="protein sequence ID" value="BAC47901"/>
    <property type="gene ID" value="BAC47901"/>
</dbReference>
<dbReference type="GeneID" id="46489684"/>
<dbReference type="KEGG" id="bja:bll2636"/>
<dbReference type="PATRIC" id="fig|224911.44.peg.2236"/>
<dbReference type="eggNOG" id="COG2127">
    <property type="taxonomic scope" value="Bacteria"/>
</dbReference>
<dbReference type="HOGENOM" id="CLU_134358_3_0_5"/>
<dbReference type="InParanoid" id="Q89RX6"/>
<dbReference type="OrthoDB" id="9796121at2"/>
<dbReference type="PhylomeDB" id="Q89RX6"/>
<dbReference type="Proteomes" id="UP000002526">
    <property type="component" value="Chromosome"/>
</dbReference>
<dbReference type="GO" id="GO:0030163">
    <property type="term" value="P:protein catabolic process"/>
    <property type="evidence" value="ECO:0007669"/>
    <property type="project" value="InterPro"/>
</dbReference>
<dbReference type="GO" id="GO:0006508">
    <property type="term" value="P:proteolysis"/>
    <property type="evidence" value="ECO:0007669"/>
    <property type="project" value="UniProtKB-UniRule"/>
</dbReference>
<dbReference type="FunFam" id="3.30.1390.10:FF:000002">
    <property type="entry name" value="ATP-dependent Clp protease adapter protein ClpS"/>
    <property type="match status" value="1"/>
</dbReference>
<dbReference type="Gene3D" id="3.30.1390.10">
    <property type="match status" value="1"/>
</dbReference>
<dbReference type="HAMAP" id="MF_00302">
    <property type="entry name" value="ClpS"/>
    <property type="match status" value="1"/>
</dbReference>
<dbReference type="InterPro" id="IPR022935">
    <property type="entry name" value="ClpS"/>
</dbReference>
<dbReference type="InterPro" id="IPR003769">
    <property type="entry name" value="ClpS_core"/>
</dbReference>
<dbReference type="InterPro" id="IPR014719">
    <property type="entry name" value="Ribosomal_bL12_C/ClpS-like"/>
</dbReference>
<dbReference type="NCBIfam" id="NF009564">
    <property type="entry name" value="PRK13019.1-4"/>
    <property type="match status" value="1"/>
</dbReference>
<dbReference type="PANTHER" id="PTHR33473:SF19">
    <property type="entry name" value="ATP-DEPENDENT CLP PROTEASE ADAPTER PROTEIN CLPS"/>
    <property type="match status" value="1"/>
</dbReference>
<dbReference type="PANTHER" id="PTHR33473">
    <property type="entry name" value="ATP-DEPENDENT CLP PROTEASE ADAPTER PROTEIN CLPS1, CHLOROPLASTIC"/>
    <property type="match status" value="1"/>
</dbReference>
<dbReference type="Pfam" id="PF02617">
    <property type="entry name" value="ClpS"/>
    <property type="match status" value="1"/>
</dbReference>
<dbReference type="SUPFAM" id="SSF54736">
    <property type="entry name" value="ClpS-like"/>
    <property type="match status" value="1"/>
</dbReference>
<name>CLPS1_BRADU</name>
<comment type="function">
    <text evidence="1">Involved in the modulation of the specificity of the ClpAP-mediated ATP-dependent protein degradation.</text>
</comment>
<comment type="subunit">
    <text evidence="1">Binds to the N-terminal domain of the chaperone ClpA.</text>
</comment>
<comment type="similarity">
    <text evidence="1">Belongs to the ClpS family.</text>
</comment>
<accession>Q89RX6</accession>
<gene>
    <name evidence="1" type="primary">clpS1</name>
    <name type="ordered locus">bll2636</name>
</gene>
<protein>
    <recommendedName>
        <fullName evidence="1">ATP-dependent Clp protease adapter protein ClpS 1</fullName>
    </recommendedName>
</protein>
<reference key="1">
    <citation type="journal article" date="2002" name="DNA Res.">
        <title>Complete genomic sequence of nitrogen-fixing symbiotic bacterium Bradyrhizobium japonicum USDA110.</title>
        <authorList>
            <person name="Kaneko T."/>
            <person name="Nakamura Y."/>
            <person name="Sato S."/>
            <person name="Minamisawa K."/>
            <person name="Uchiumi T."/>
            <person name="Sasamoto S."/>
            <person name="Watanabe A."/>
            <person name="Idesawa K."/>
            <person name="Iriguchi M."/>
            <person name="Kawashima K."/>
            <person name="Kohara M."/>
            <person name="Matsumoto M."/>
            <person name="Shimpo S."/>
            <person name="Tsuruoka H."/>
            <person name="Wada T."/>
            <person name="Yamada M."/>
            <person name="Tabata S."/>
        </authorList>
    </citation>
    <scope>NUCLEOTIDE SEQUENCE [LARGE SCALE GENOMIC DNA]</scope>
    <source>
        <strain>JCM 10833 / BCRC 13528 / IAM 13628 / NBRC 14792 / USDA 110</strain>
    </source>
</reference>
<feature type="chain" id="PRO_0000215691" description="ATP-dependent Clp protease adapter protein ClpS 1">
    <location>
        <begin position="1"/>
        <end position="101"/>
    </location>
</feature>
<proteinExistence type="inferred from homology"/>
<organism>
    <name type="scientific">Bradyrhizobium diazoefficiens (strain JCM 10833 / BCRC 13528 / IAM 13628 / NBRC 14792 / USDA 110)</name>
    <dbReference type="NCBI Taxonomy" id="224911"/>
    <lineage>
        <taxon>Bacteria</taxon>
        <taxon>Pseudomonadati</taxon>
        <taxon>Pseudomonadota</taxon>
        <taxon>Alphaproteobacteria</taxon>
        <taxon>Hyphomicrobiales</taxon>
        <taxon>Nitrobacteraceae</taxon>
        <taxon>Bradyrhizobium</taxon>
    </lineage>
</organism>
<sequence>MNDAVTKPKTRTKTKVERPKLHKVILINDDYTPREFVTMILKAEFRMTEDQAYKVMITAHKLGACVVAVFTRDVAETKATRATDAGRAKGYPLLFTTEPEE</sequence>
<keyword id="KW-1185">Reference proteome</keyword>